<geneLocation type="mitochondrion"/>
<sequence length="381" mass="42919">MINLRKTHPLMKIINHSFIDLPTPSNISAWWNFGSLLGVCLIIQILTGLFLSMHYTSDTLTAFSSVVHICRDVNYGWLIRNLHANGASMFFMCLFLHVGRGIYYGSYLYKETWNIGVILLLTVMATAFVGYVLPWGQMSFWGATVITNLLSAIPYIGTTLVEWIWGGFSVDKATLTRFFAFHFILPFIITALVIVHLLFLHETGSNNPSGIDPNADKIPFHPYYTIKDIMGLTIMILALLTLALFHPDVLGDPDNFSPANPLNTPPHIKPEWYFLFAYAILRSIPNKLGGVIALLASILILLVMPFLHTSKQRSMMFRPISQTLFWLLTANLATLTWIGGQPVEEPYIIIGQAASITYFLIILVLMPMAGLLENHMLKPKW</sequence>
<protein>
    <recommendedName>
        <fullName>Cytochrome b</fullName>
    </recommendedName>
    <alternativeName>
        <fullName>Complex III subunit 3</fullName>
    </alternativeName>
    <alternativeName>
        <fullName>Complex III subunit III</fullName>
    </alternativeName>
    <alternativeName>
        <fullName>Cytochrome b-c1 complex subunit 3</fullName>
    </alternativeName>
    <alternativeName>
        <fullName>Ubiquinol-cytochrome-c reductase complex cytochrome b subunit</fullName>
    </alternativeName>
</protein>
<name>CYB_DACTR</name>
<gene>
    <name type="primary">MT-CYB</name>
    <name type="synonym">COB</name>
    <name type="synonym">CYTB</name>
    <name type="synonym">MTCYB</name>
</gene>
<reference key="1">
    <citation type="journal article" date="2006" name="Genes Genet. Syst.">
        <title>Phylogenetic analysis of diprotodontian marsupials based on complete mitochondrial genomes.</title>
        <authorList>
            <person name="Munemasa M."/>
            <person name="Nikaido M."/>
            <person name="Donnellan S."/>
            <person name="Austin C.C."/>
            <person name="Okada N."/>
            <person name="Hasegawa M."/>
        </authorList>
    </citation>
    <scope>NUCLEOTIDE SEQUENCE [GENOMIC DNA]</scope>
    <source>
        <tissue>Liver</tissue>
    </source>
</reference>
<accession>Q1MWH4</accession>
<feature type="chain" id="PRO_0000257891" description="Cytochrome b">
    <location>
        <begin position="1"/>
        <end position="381"/>
    </location>
</feature>
<feature type="transmembrane region" description="Helical" evidence="2">
    <location>
        <begin position="33"/>
        <end position="53"/>
    </location>
</feature>
<feature type="transmembrane region" description="Helical" evidence="2">
    <location>
        <begin position="77"/>
        <end position="98"/>
    </location>
</feature>
<feature type="transmembrane region" description="Helical" evidence="2">
    <location>
        <begin position="113"/>
        <end position="133"/>
    </location>
</feature>
<feature type="transmembrane region" description="Helical" evidence="2">
    <location>
        <begin position="178"/>
        <end position="198"/>
    </location>
</feature>
<feature type="transmembrane region" description="Helical" evidence="2">
    <location>
        <begin position="226"/>
        <end position="246"/>
    </location>
</feature>
<feature type="transmembrane region" description="Helical" evidence="2">
    <location>
        <begin position="288"/>
        <end position="308"/>
    </location>
</feature>
<feature type="transmembrane region" description="Helical" evidence="2">
    <location>
        <begin position="320"/>
        <end position="340"/>
    </location>
</feature>
<feature type="transmembrane region" description="Helical" evidence="2">
    <location>
        <begin position="347"/>
        <end position="367"/>
    </location>
</feature>
<feature type="binding site" description="axial binding residue" evidence="2">
    <location>
        <position position="83"/>
    </location>
    <ligand>
        <name>heme b</name>
        <dbReference type="ChEBI" id="CHEBI:60344"/>
        <label>b562</label>
    </ligand>
    <ligandPart>
        <name>Fe</name>
        <dbReference type="ChEBI" id="CHEBI:18248"/>
    </ligandPart>
</feature>
<feature type="binding site" description="axial binding residue" evidence="2">
    <location>
        <position position="97"/>
    </location>
    <ligand>
        <name>heme b</name>
        <dbReference type="ChEBI" id="CHEBI:60344"/>
        <label>b566</label>
    </ligand>
    <ligandPart>
        <name>Fe</name>
        <dbReference type="ChEBI" id="CHEBI:18248"/>
    </ligandPart>
</feature>
<feature type="binding site" description="axial binding residue" evidence="2">
    <location>
        <position position="182"/>
    </location>
    <ligand>
        <name>heme b</name>
        <dbReference type="ChEBI" id="CHEBI:60344"/>
        <label>b562</label>
    </ligand>
    <ligandPart>
        <name>Fe</name>
        <dbReference type="ChEBI" id="CHEBI:18248"/>
    </ligandPart>
</feature>
<feature type="binding site" description="axial binding residue" evidence="2">
    <location>
        <position position="196"/>
    </location>
    <ligand>
        <name>heme b</name>
        <dbReference type="ChEBI" id="CHEBI:60344"/>
        <label>b566</label>
    </ligand>
    <ligandPart>
        <name>Fe</name>
        <dbReference type="ChEBI" id="CHEBI:18248"/>
    </ligandPart>
</feature>
<feature type="binding site" evidence="2">
    <location>
        <position position="201"/>
    </location>
    <ligand>
        <name>a ubiquinone</name>
        <dbReference type="ChEBI" id="CHEBI:16389"/>
    </ligand>
</feature>
<proteinExistence type="inferred from homology"/>
<organism>
    <name type="scientific">Dactylopsila trivirgata</name>
    <name type="common">Striped possum</name>
    <dbReference type="NCBI Taxonomy" id="38616"/>
    <lineage>
        <taxon>Eukaryota</taxon>
        <taxon>Metazoa</taxon>
        <taxon>Chordata</taxon>
        <taxon>Craniata</taxon>
        <taxon>Vertebrata</taxon>
        <taxon>Euteleostomi</taxon>
        <taxon>Mammalia</taxon>
        <taxon>Metatheria</taxon>
        <taxon>Diprotodontia</taxon>
        <taxon>Petauridae</taxon>
        <taxon>Dactylopsila</taxon>
    </lineage>
</organism>
<keyword id="KW-0249">Electron transport</keyword>
<keyword id="KW-0349">Heme</keyword>
<keyword id="KW-0408">Iron</keyword>
<keyword id="KW-0472">Membrane</keyword>
<keyword id="KW-0479">Metal-binding</keyword>
<keyword id="KW-0496">Mitochondrion</keyword>
<keyword id="KW-0999">Mitochondrion inner membrane</keyword>
<keyword id="KW-0679">Respiratory chain</keyword>
<keyword id="KW-0812">Transmembrane</keyword>
<keyword id="KW-1133">Transmembrane helix</keyword>
<keyword id="KW-0813">Transport</keyword>
<keyword id="KW-0830">Ubiquinone</keyword>
<comment type="function">
    <text evidence="2">Component of the ubiquinol-cytochrome c reductase complex (complex III or cytochrome b-c1 complex) that is part of the mitochondrial respiratory chain. The b-c1 complex mediates electron transfer from ubiquinol to cytochrome c. Contributes to the generation of a proton gradient across the mitochondrial membrane that is then used for ATP synthesis.</text>
</comment>
<comment type="cofactor">
    <cofactor evidence="2">
        <name>heme b</name>
        <dbReference type="ChEBI" id="CHEBI:60344"/>
    </cofactor>
    <text evidence="2">Binds 2 heme b groups non-covalently.</text>
</comment>
<comment type="subunit">
    <text evidence="2">The cytochrome bc1 complex contains 11 subunits: 3 respiratory subunits (MT-CYB, CYC1 and UQCRFS1), 2 core proteins (UQCRC1 and UQCRC2) and 6 low-molecular weight proteins (UQCRH/QCR6, UQCRB/QCR7, UQCRQ/QCR8, UQCR10/QCR9, UQCR11/QCR10 and a cleavage product of UQCRFS1). This cytochrome bc1 complex then forms a dimer.</text>
</comment>
<comment type="subcellular location">
    <subcellularLocation>
        <location evidence="2">Mitochondrion inner membrane</location>
        <topology evidence="2">Multi-pass membrane protein</topology>
    </subcellularLocation>
</comment>
<comment type="miscellaneous">
    <text evidence="1">Heme 1 (or BL or b562) is low-potential and absorbs at about 562 nm, and heme 2 (or BH or b566) is high-potential and absorbs at about 566 nm.</text>
</comment>
<comment type="similarity">
    <text evidence="3 4">Belongs to the cytochrome b family.</text>
</comment>
<comment type="caution">
    <text evidence="2">The full-length protein contains only eight transmembrane helices, not nine as predicted by bioinformatics tools.</text>
</comment>
<evidence type="ECO:0000250" key="1"/>
<evidence type="ECO:0000250" key="2">
    <source>
        <dbReference type="UniProtKB" id="P00157"/>
    </source>
</evidence>
<evidence type="ECO:0000255" key="3">
    <source>
        <dbReference type="PROSITE-ProRule" id="PRU00967"/>
    </source>
</evidence>
<evidence type="ECO:0000255" key="4">
    <source>
        <dbReference type="PROSITE-ProRule" id="PRU00968"/>
    </source>
</evidence>
<dbReference type="EMBL" id="AB241054">
    <property type="protein sequence ID" value="BAE93992.1"/>
    <property type="molecule type" value="Genomic_DNA"/>
</dbReference>
<dbReference type="RefSeq" id="YP_637035.1">
    <property type="nucleotide sequence ID" value="NC_008134.1"/>
</dbReference>
<dbReference type="SMR" id="Q1MWH4"/>
<dbReference type="GeneID" id="4108285"/>
<dbReference type="CTD" id="4519"/>
<dbReference type="GO" id="GO:0005743">
    <property type="term" value="C:mitochondrial inner membrane"/>
    <property type="evidence" value="ECO:0007669"/>
    <property type="project" value="UniProtKB-SubCell"/>
</dbReference>
<dbReference type="GO" id="GO:0045275">
    <property type="term" value="C:respiratory chain complex III"/>
    <property type="evidence" value="ECO:0007669"/>
    <property type="project" value="InterPro"/>
</dbReference>
<dbReference type="GO" id="GO:0046872">
    <property type="term" value="F:metal ion binding"/>
    <property type="evidence" value="ECO:0007669"/>
    <property type="project" value="UniProtKB-KW"/>
</dbReference>
<dbReference type="GO" id="GO:0008121">
    <property type="term" value="F:ubiquinol-cytochrome-c reductase activity"/>
    <property type="evidence" value="ECO:0007669"/>
    <property type="project" value="InterPro"/>
</dbReference>
<dbReference type="GO" id="GO:0006122">
    <property type="term" value="P:mitochondrial electron transport, ubiquinol to cytochrome c"/>
    <property type="evidence" value="ECO:0007669"/>
    <property type="project" value="TreeGrafter"/>
</dbReference>
<dbReference type="CDD" id="cd00290">
    <property type="entry name" value="cytochrome_b_C"/>
    <property type="match status" value="1"/>
</dbReference>
<dbReference type="CDD" id="cd00284">
    <property type="entry name" value="Cytochrome_b_N"/>
    <property type="match status" value="1"/>
</dbReference>
<dbReference type="FunFam" id="1.20.810.10:FF:000002">
    <property type="entry name" value="Cytochrome b"/>
    <property type="match status" value="1"/>
</dbReference>
<dbReference type="Gene3D" id="1.20.810.10">
    <property type="entry name" value="Cytochrome Bc1 Complex, Chain C"/>
    <property type="match status" value="1"/>
</dbReference>
<dbReference type="InterPro" id="IPR005798">
    <property type="entry name" value="Cyt_b/b6_C"/>
</dbReference>
<dbReference type="InterPro" id="IPR036150">
    <property type="entry name" value="Cyt_b/b6_C_sf"/>
</dbReference>
<dbReference type="InterPro" id="IPR005797">
    <property type="entry name" value="Cyt_b/b6_N"/>
</dbReference>
<dbReference type="InterPro" id="IPR027387">
    <property type="entry name" value="Cytb/b6-like_sf"/>
</dbReference>
<dbReference type="InterPro" id="IPR030689">
    <property type="entry name" value="Cytochrome_b"/>
</dbReference>
<dbReference type="InterPro" id="IPR048260">
    <property type="entry name" value="Cytochrome_b_C_euk/bac"/>
</dbReference>
<dbReference type="InterPro" id="IPR048259">
    <property type="entry name" value="Cytochrome_b_N_euk/bac"/>
</dbReference>
<dbReference type="InterPro" id="IPR016174">
    <property type="entry name" value="Di-haem_cyt_TM"/>
</dbReference>
<dbReference type="PANTHER" id="PTHR19271">
    <property type="entry name" value="CYTOCHROME B"/>
    <property type="match status" value="1"/>
</dbReference>
<dbReference type="PANTHER" id="PTHR19271:SF16">
    <property type="entry name" value="CYTOCHROME B"/>
    <property type="match status" value="1"/>
</dbReference>
<dbReference type="Pfam" id="PF00032">
    <property type="entry name" value="Cytochrom_B_C"/>
    <property type="match status" value="1"/>
</dbReference>
<dbReference type="Pfam" id="PF00033">
    <property type="entry name" value="Cytochrome_B"/>
    <property type="match status" value="1"/>
</dbReference>
<dbReference type="PIRSF" id="PIRSF038885">
    <property type="entry name" value="COB"/>
    <property type="match status" value="1"/>
</dbReference>
<dbReference type="SUPFAM" id="SSF81648">
    <property type="entry name" value="a domain/subunit of cytochrome bc1 complex (Ubiquinol-cytochrome c reductase)"/>
    <property type="match status" value="1"/>
</dbReference>
<dbReference type="SUPFAM" id="SSF81342">
    <property type="entry name" value="Transmembrane di-heme cytochromes"/>
    <property type="match status" value="1"/>
</dbReference>
<dbReference type="PROSITE" id="PS51003">
    <property type="entry name" value="CYTB_CTER"/>
    <property type="match status" value="1"/>
</dbReference>
<dbReference type="PROSITE" id="PS51002">
    <property type="entry name" value="CYTB_NTER"/>
    <property type="match status" value="1"/>
</dbReference>